<gene>
    <name type="ordered locus">YPTS_2927</name>
</gene>
<dbReference type="EC" id="2.7.1.-" evidence="1"/>
<dbReference type="EMBL" id="CP001048">
    <property type="protein sequence ID" value="ACC89884.1"/>
    <property type="molecule type" value="Genomic_DNA"/>
</dbReference>
<dbReference type="SMR" id="B2K9M7"/>
<dbReference type="KEGG" id="ypb:YPTS_2927"/>
<dbReference type="PATRIC" id="fig|502801.10.peg.2356"/>
<dbReference type="GO" id="GO:0005737">
    <property type="term" value="C:cytoplasm"/>
    <property type="evidence" value="ECO:0007669"/>
    <property type="project" value="UniProtKB-SubCell"/>
</dbReference>
<dbReference type="GO" id="GO:0005886">
    <property type="term" value="C:plasma membrane"/>
    <property type="evidence" value="ECO:0007669"/>
    <property type="project" value="TreeGrafter"/>
</dbReference>
<dbReference type="GO" id="GO:0005524">
    <property type="term" value="F:ATP binding"/>
    <property type="evidence" value="ECO:0007669"/>
    <property type="project" value="UniProtKB-UniRule"/>
</dbReference>
<dbReference type="GO" id="GO:0001727">
    <property type="term" value="F:lipid kinase activity"/>
    <property type="evidence" value="ECO:0007669"/>
    <property type="project" value="UniProtKB-UniRule"/>
</dbReference>
<dbReference type="GO" id="GO:0000287">
    <property type="term" value="F:magnesium ion binding"/>
    <property type="evidence" value="ECO:0007669"/>
    <property type="project" value="UniProtKB-UniRule"/>
</dbReference>
<dbReference type="GO" id="GO:0008654">
    <property type="term" value="P:phospholipid biosynthetic process"/>
    <property type="evidence" value="ECO:0007669"/>
    <property type="project" value="UniProtKB-UniRule"/>
</dbReference>
<dbReference type="Gene3D" id="2.60.200.40">
    <property type="match status" value="1"/>
</dbReference>
<dbReference type="Gene3D" id="3.40.50.10330">
    <property type="entry name" value="Probable inorganic polyphosphate/atp-NAD kinase, domain 1"/>
    <property type="match status" value="1"/>
</dbReference>
<dbReference type="HAMAP" id="MF_01377">
    <property type="entry name" value="YegS"/>
    <property type="match status" value="1"/>
</dbReference>
<dbReference type="InterPro" id="IPR017438">
    <property type="entry name" value="ATP-NAD_kinase_N"/>
</dbReference>
<dbReference type="InterPro" id="IPR005218">
    <property type="entry name" value="Diacylglycerol/lipid_kinase"/>
</dbReference>
<dbReference type="InterPro" id="IPR001206">
    <property type="entry name" value="Diacylglycerol_kinase_cat_dom"/>
</dbReference>
<dbReference type="InterPro" id="IPR022433">
    <property type="entry name" value="Lip_kinase_YegS"/>
</dbReference>
<dbReference type="InterPro" id="IPR050187">
    <property type="entry name" value="Lipid_Phosphate_FormReg"/>
</dbReference>
<dbReference type="InterPro" id="IPR016064">
    <property type="entry name" value="NAD/diacylglycerol_kinase_sf"/>
</dbReference>
<dbReference type="InterPro" id="IPR045540">
    <property type="entry name" value="YegS/DAGK_C"/>
</dbReference>
<dbReference type="NCBIfam" id="TIGR03702">
    <property type="entry name" value="lip_kinase_YegS"/>
    <property type="match status" value="1"/>
</dbReference>
<dbReference type="NCBIfam" id="NF009602">
    <property type="entry name" value="PRK13054.1"/>
    <property type="match status" value="1"/>
</dbReference>
<dbReference type="NCBIfam" id="TIGR00147">
    <property type="entry name" value="YegS/Rv2252/BmrU family lipid kinase"/>
    <property type="match status" value="1"/>
</dbReference>
<dbReference type="PANTHER" id="PTHR12358:SF106">
    <property type="entry name" value="LIPID KINASE YEGS"/>
    <property type="match status" value="1"/>
</dbReference>
<dbReference type="PANTHER" id="PTHR12358">
    <property type="entry name" value="SPHINGOSINE KINASE"/>
    <property type="match status" value="1"/>
</dbReference>
<dbReference type="Pfam" id="PF00781">
    <property type="entry name" value="DAGK_cat"/>
    <property type="match status" value="1"/>
</dbReference>
<dbReference type="Pfam" id="PF19279">
    <property type="entry name" value="YegS_C"/>
    <property type="match status" value="1"/>
</dbReference>
<dbReference type="SMART" id="SM00046">
    <property type="entry name" value="DAGKc"/>
    <property type="match status" value="1"/>
</dbReference>
<dbReference type="SUPFAM" id="SSF111331">
    <property type="entry name" value="NAD kinase/diacylglycerol kinase-like"/>
    <property type="match status" value="1"/>
</dbReference>
<dbReference type="PROSITE" id="PS50146">
    <property type="entry name" value="DAGK"/>
    <property type="match status" value="1"/>
</dbReference>
<protein>
    <recommendedName>
        <fullName evidence="1">Probable lipid kinase YegS-like</fullName>
        <ecNumber evidence="1">2.7.1.-</ecNumber>
    </recommendedName>
</protein>
<proteinExistence type="inferred from homology"/>
<feature type="chain" id="PRO_1000144881" description="Probable lipid kinase YegS-like">
    <location>
        <begin position="1"/>
        <end position="296"/>
    </location>
</feature>
<feature type="domain" description="DAGKc" evidence="1">
    <location>
        <begin position="1"/>
        <end position="130"/>
    </location>
</feature>
<feature type="active site" description="Proton acceptor" evidence="1">
    <location>
        <position position="268"/>
    </location>
</feature>
<feature type="binding site" evidence="1">
    <location>
        <position position="37"/>
    </location>
    <ligand>
        <name>ATP</name>
        <dbReference type="ChEBI" id="CHEBI:30616"/>
    </ligand>
</feature>
<feature type="binding site" evidence="1">
    <location>
        <begin position="63"/>
        <end position="69"/>
    </location>
    <ligand>
        <name>ATP</name>
        <dbReference type="ChEBI" id="CHEBI:30616"/>
    </ligand>
</feature>
<feature type="binding site" evidence="1">
    <location>
        <position position="92"/>
    </location>
    <ligand>
        <name>ATP</name>
        <dbReference type="ChEBI" id="CHEBI:30616"/>
    </ligand>
</feature>
<feature type="binding site" evidence="1">
    <location>
        <position position="212"/>
    </location>
    <ligand>
        <name>Mg(2+)</name>
        <dbReference type="ChEBI" id="CHEBI:18420"/>
    </ligand>
</feature>
<feature type="binding site" evidence="1">
    <location>
        <position position="215"/>
    </location>
    <ligand>
        <name>Mg(2+)</name>
        <dbReference type="ChEBI" id="CHEBI:18420"/>
    </ligand>
</feature>
<feature type="binding site" evidence="1">
    <location>
        <position position="217"/>
    </location>
    <ligand>
        <name>Mg(2+)</name>
        <dbReference type="ChEBI" id="CHEBI:18420"/>
    </ligand>
</feature>
<comment type="function">
    <text evidence="1">Probably phosphorylates lipids; the in vivo substrate is unknown.</text>
</comment>
<comment type="cofactor">
    <cofactor evidence="1">
        <name>Mg(2+)</name>
        <dbReference type="ChEBI" id="CHEBI:18420"/>
    </cofactor>
    <cofactor evidence="1">
        <name>Ca(2+)</name>
        <dbReference type="ChEBI" id="CHEBI:29108"/>
    </cofactor>
    <text evidence="1">Binds 1 Mg(2+) ion per subunit. Ca(2+) may be able to substitute.</text>
</comment>
<comment type="subcellular location">
    <subcellularLocation>
        <location evidence="1">Cytoplasm</location>
    </subcellularLocation>
</comment>
<comment type="similarity">
    <text evidence="1">Belongs to the diacylglycerol/lipid kinase family. YegS lipid kinase subfamily.</text>
</comment>
<reference key="1">
    <citation type="submission" date="2008-04" db="EMBL/GenBank/DDBJ databases">
        <title>Complete sequence of Yersinia pseudotuberculosis PB1/+.</title>
        <authorList>
            <person name="Copeland A."/>
            <person name="Lucas S."/>
            <person name="Lapidus A."/>
            <person name="Glavina del Rio T."/>
            <person name="Dalin E."/>
            <person name="Tice H."/>
            <person name="Bruce D."/>
            <person name="Goodwin L."/>
            <person name="Pitluck S."/>
            <person name="Munk A.C."/>
            <person name="Brettin T."/>
            <person name="Detter J.C."/>
            <person name="Han C."/>
            <person name="Tapia R."/>
            <person name="Schmutz J."/>
            <person name="Larimer F."/>
            <person name="Land M."/>
            <person name="Hauser L."/>
            <person name="Challacombe J.F."/>
            <person name="Green L."/>
            <person name="Lindler L.E."/>
            <person name="Nikolich M.P."/>
            <person name="Richardson P."/>
        </authorList>
    </citation>
    <scope>NUCLEOTIDE SEQUENCE [LARGE SCALE GENOMIC DNA]</scope>
    <source>
        <strain>PB1/+</strain>
    </source>
</reference>
<sequence>MPHTLLILNGKESGNPEVREAVKNVRDEGLTLHVRITWEHGDAKRYVEEAATLAVSTVIAGGGDGTINEVATALMSLPADKRPCLGILPLGTANDFATGCNIPLQIENALQLAVKGRAVAIDLAQVNGEHYFINMATGGFGTRITTETPDKLKAALGGVSYFIHGLMRLDALKADSCKIHGPDFHWSGDALVIGIGNGKQAGGGQLLCPDALINDGLMQLRLLTAKELLPAVLSTLFNGEKNKNVIDATVPWLDITAPNDITFNLDGEPLSGRHFHIEILPHAIQCRLPPNCPLLG</sequence>
<name>YEGS_YERPB</name>
<organism>
    <name type="scientific">Yersinia pseudotuberculosis serotype IB (strain PB1/+)</name>
    <dbReference type="NCBI Taxonomy" id="502801"/>
    <lineage>
        <taxon>Bacteria</taxon>
        <taxon>Pseudomonadati</taxon>
        <taxon>Pseudomonadota</taxon>
        <taxon>Gammaproteobacteria</taxon>
        <taxon>Enterobacterales</taxon>
        <taxon>Yersiniaceae</taxon>
        <taxon>Yersinia</taxon>
    </lineage>
</organism>
<keyword id="KW-0067">ATP-binding</keyword>
<keyword id="KW-0963">Cytoplasm</keyword>
<keyword id="KW-0418">Kinase</keyword>
<keyword id="KW-0444">Lipid biosynthesis</keyword>
<keyword id="KW-0443">Lipid metabolism</keyword>
<keyword id="KW-0460">Magnesium</keyword>
<keyword id="KW-0479">Metal-binding</keyword>
<keyword id="KW-0547">Nucleotide-binding</keyword>
<keyword id="KW-0594">Phospholipid biosynthesis</keyword>
<keyword id="KW-1208">Phospholipid metabolism</keyword>
<keyword id="KW-0808">Transferase</keyword>
<accession>B2K9M7</accession>
<evidence type="ECO:0000255" key="1">
    <source>
        <dbReference type="HAMAP-Rule" id="MF_01377"/>
    </source>
</evidence>